<dbReference type="EC" id="7.1.1.9"/>
<dbReference type="EMBL" id="AE006914">
    <property type="protein sequence ID" value="AAL02778.1"/>
    <property type="status" value="ALT_INIT"/>
    <property type="molecule type" value="Genomic_DNA"/>
</dbReference>
<dbReference type="PIR" id="H97729">
    <property type="entry name" value="H97729"/>
</dbReference>
<dbReference type="RefSeq" id="WP_004996526.1">
    <property type="nucleotide sequence ID" value="NC_003103.1"/>
</dbReference>
<dbReference type="SMR" id="Q92J29"/>
<dbReference type="KEGG" id="rco:RC0240"/>
<dbReference type="HOGENOM" id="CLU_044071_0_0_5"/>
<dbReference type="Proteomes" id="UP000000816">
    <property type="component" value="Chromosome"/>
</dbReference>
<dbReference type="GO" id="GO:0005886">
    <property type="term" value="C:plasma membrane"/>
    <property type="evidence" value="ECO:0007669"/>
    <property type="project" value="UniProtKB-SubCell"/>
</dbReference>
<dbReference type="GO" id="GO:0004129">
    <property type="term" value="F:cytochrome-c oxidase activity"/>
    <property type="evidence" value="ECO:0007669"/>
    <property type="project" value="UniProtKB-EC"/>
</dbReference>
<dbReference type="GO" id="GO:0019646">
    <property type="term" value="P:aerobic electron transport chain"/>
    <property type="evidence" value="ECO:0007669"/>
    <property type="project" value="InterPro"/>
</dbReference>
<dbReference type="CDD" id="cd01665">
    <property type="entry name" value="Cyt_c_Oxidase_III"/>
    <property type="match status" value="1"/>
</dbReference>
<dbReference type="FunFam" id="1.10.287.70:FF:000082">
    <property type="entry name" value="Cytochrome c oxidase subunit 3"/>
    <property type="match status" value="1"/>
</dbReference>
<dbReference type="FunFam" id="1.20.120.80:FF:000003">
    <property type="entry name" value="Cytochrome c oxidase subunit 3"/>
    <property type="match status" value="1"/>
</dbReference>
<dbReference type="Gene3D" id="1.10.287.70">
    <property type="match status" value="1"/>
</dbReference>
<dbReference type="Gene3D" id="1.20.120.80">
    <property type="entry name" value="Cytochrome c oxidase, subunit III, four-helix bundle"/>
    <property type="match status" value="1"/>
</dbReference>
<dbReference type="InterPro" id="IPR024791">
    <property type="entry name" value="Cyt_c/ubiquinol_Oxase_su3"/>
</dbReference>
<dbReference type="InterPro" id="IPR033945">
    <property type="entry name" value="Cyt_c_oxase_su3_dom"/>
</dbReference>
<dbReference type="InterPro" id="IPR000298">
    <property type="entry name" value="Cyt_c_oxidase-like_su3"/>
</dbReference>
<dbReference type="InterPro" id="IPR035973">
    <property type="entry name" value="Cyt_c_oxidase_su3-like_sf"/>
</dbReference>
<dbReference type="InterPro" id="IPR013833">
    <property type="entry name" value="Cyt_c_oxidase_su3_a-hlx"/>
</dbReference>
<dbReference type="PANTHER" id="PTHR11403:SF7">
    <property type="entry name" value="CYTOCHROME C OXIDASE SUBUNIT 3"/>
    <property type="match status" value="1"/>
</dbReference>
<dbReference type="PANTHER" id="PTHR11403">
    <property type="entry name" value="CYTOCHROME C OXIDASE SUBUNIT III"/>
    <property type="match status" value="1"/>
</dbReference>
<dbReference type="Pfam" id="PF00510">
    <property type="entry name" value="COX3"/>
    <property type="match status" value="1"/>
</dbReference>
<dbReference type="SUPFAM" id="SSF81452">
    <property type="entry name" value="Cytochrome c oxidase subunit III-like"/>
    <property type="match status" value="1"/>
</dbReference>
<dbReference type="PROSITE" id="PS50253">
    <property type="entry name" value="COX3"/>
    <property type="match status" value="1"/>
</dbReference>
<protein>
    <recommendedName>
        <fullName>Probable cytochrome c oxidase subunit 3</fullName>
        <ecNumber>7.1.1.9</ecNumber>
    </recommendedName>
    <alternativeName>
        <fullName>Cytochrome aa3 subunit 3</fullName>
    </alternativeName>
    <alternativeName>
        <fullName>Cytochrome c oxidase polypeptide III</fullName>
    </alternativeName>
</protein>
<name>COX3_RICCN</name>
<proteinExistence type="inferred from homology"/>
<gene>
    <name type="primary">ctaE</name>
    <name type="synonym">coxC</name>
    <name type="ordered locus">RC0240</name>
</gene>
<accession>Q92J29</accession>
<evidence type="ECO:0000250" key="1"/>
<evidence type="ECO:0000255" key="2"/>
<evidence type="ECO:0000305" key="3"/>
<sequence>MSQKIILNNSYSITKSHLFHIVDPSPWPVLTSFALLLLVIGGVSFMHGYKFNIYILSAGIISVGYCLYSWWRDIVKEGIVEHQHTSPVRKGLQIGMALFILTEIVFFGVFFASFFKSSLSPVGLLDGVWVVKQGIWPPPTIKTFEPFDIPFINTLILLLSGTTVTWAHYALEEKNQKDCVTALALTILLGIFFTTMQAYEYYHAAFKFTDGIYASNFYLATGFHGAHVIIGTIFLIICYFRAKRGDFTTEGNGHLGFECAAWYWHFVDVVWLFLFTFVYIFGS</sequence>
<reference key="1">
    <citation type="journal article" date="2001" name="Science">
        <title>Mechanisms of evolution in Rickettsia conorii and R. prowazekii.</title>
        <authorList>
            <person name="Ogata H."/>
            <person name="Audic S."/>
            <person name="Renesto-Audiffren P."/>
            <person name="Fournier P.-E."/>
            <person name="Barbe V."/>
            <person name="Samson D."/>
            <person name="Roux V."/>
            <person name="Cossart P."/>
            <person name="Weissenbach J."/>
            <person name="Claverie J.-M."/>
            <person name="Raoult D."/>
        </authorList>
    </citation>
    <scope>NUCLEOTIDE SEQUENCE [LARGE SCALE GENOMIC DNA]</scope>
    <source>
        <strain>ATCC VR-613 / Malish 7</strain>
    </source>
</reference>
<keyword id="KW-1003">Cell membrane</keyword>
<keyword id="KW-0472">Membrane</keyword>
<keyword id="KW-1278">Translocase</keyword>
<keyword id="KW-0812">Transmembrane</keyword>
<keyword id="KW-1133">Transmembrane helix</keyword>
<organism>
    <name type="scientific">Rickettsia conorii (strain ATCC VR-613 / Malish 7)</name>
    <dbReference type="NCBI Taxonomy" id="272944"/>
    <lineage>
        <taxon>Bacteria</taxon>
        <taxon>Pseudomonadati</taxon>
        <taxon>Pseudomonadota</taxon>
        <taxon>Alphaproteobacteria</taxon>
        <taxon>Rickettsiales</taxon>
        <taxon>Rickettsiaceae</taxon>
        <taxon>Rickettsieae</taxon>
        <taxon>Rickettsia</taxon>
        <taxon>spotted fever group</taxon>
    </lineage>
</organism>
<feature type="chain" id="PRO_0000280889" description="Probable cytochrome c oxidase subunit 3">
    <location>
        <begin position="1"/>
        <end position="283"/>
    </location>
</feature>
<feature type="transmembrane region" description="Helical" evidence="2">
    <location>
        <begin position="26"/>
        <end position="46"/>
    </location>
</feature>
<feature type="transmembrane region" description="Helical" evidence="2">
    <location>
        <begin position="51"/>
        <end position="71"/>
    </location>
</feature>
<feature type="transmembrane region" description="Helical" evidence="2">
    <location>
        <begin position="94"/>
        <end position="114"/>
    </location>
</feature>
<feature type="transmembrane region" description="Helical" evidence="2">
    <location>
        <begin position="179"/>
        <end position="199"/>
    </location>
</feature>
<feature type="transmembrane region" description="Helical" evidence="2">
    <location>
        <begin position="217"/>
        <end position="237"/>
    </location>
</feature>
<feature type="transmembrane region" description="Helical" evidence="2">
    <location>
        <begin position="261"/>
        <end position="281"/>
    </location>
</feature>
<comment type="catalytic activity">
    <reaction>
        <text>4 Fe(II)-[cytochrome c] + O2 + 8 H(+)(in) = 4 Fe(III)-[cytochrome c] + 2 H2O + 4 H(+)(out)</text>
        <dbReference type="Rhea" id="RHEA:11436"/>
        <dbReference type="Rhea" id="RHEA-COMP:10350"/>
        <dbReference type="Rhea" id="RHEA-COMP:14399"/>
        <dbReference type="ChEBI" id="CHEBI:15377"/>
        <dbReference type="ChEBI" id="CHEBI:15378"/>
        <dbReference type="ChEBI" id="CHEBI:15379"/>
        <dbReference type="ChEBI" id="CHEBI:29033"/>
        <dbReference type="ChEBI" id="CHEBI:29034"/>
        <dbReference type="EC" id="7.1.1.9"/>
    </reaction>
</comment>
<comment type="subcellular location">
    <subcellularLocation>
        <location evidence="1">Cell membrane</location>
        <topology evidence="1">Multi-pass membrane protein</topology>
    </subcellularLocation>
</comment>
<comment type="similarity">
    <text evidence="3">Belongs to the cytochrome c oxidase subunit 3 family.</text>
</comment>
<comment type="sequence caution" evidence="3">
    <conflict type="erroneous initiation">
        <sequence resource="EMBL-CDS" id="AAL02778"/>
    </conflict>
</comment>